<keyword id="KW-0004">4Fe-4S</keyword>
<keyword id="KW-0408">Iron</keyword>
<keyword id="KW-0411">Iron-sulfur</keyword>
<keyword id="KW-0456">Lyase</keyword>
<keyword id="KW-0479">Metal-binding</keyword>
<keyword id="KW-1185">Reference proteome</keyword>
<keyword id="KW-0949">S-adenosyl-L-methionine</keyword>
<keyword id="KW-0784">Thiamine biosynthesis</keyword>
<keyword id="KW-0862">Zinc</keyword>
<sequence length="426" mass="47191">MTQLEAAKRGEITEEMKFIAEREGIDPEKLRRSVAKGYTVIFRNVRHDWVKPVAVGNVVRVKVNANIGTSRDIVNVKAEIEKAKVAVKYGADTIMDLSTGGDLDSIRKAIMHAVDVPIGTVPIYQAAEEMLAKGKAIIEMSEDDMWNAVEKHFKDGVDYTTIHVGVTKEVVEKMKRVKRVVGMVSRGGTFLAAWILHWGEENPFYRDYDYLLELAKEYDVVLSLGDGLRPGGLPDAGDELQIAELYTLGRLVRRAREAGVQTMVEGPGHVPIDQIPAQIKLAKVATDNAPFYVLGPIVTDIFPGYDHITSAIGGAIAALNGADFLCYVTPAEHLGLPTVEHVREGVIAAKIAAHAVNLTRFEADFKKDYLMSLARGKLDWARQFELSQDREKFIEIRKERPTKTEACSMCGDLCAIKLINDMLRKG</sequence>
<name>THIC_THEGJ</name>
<organism>
    <name type="scientific">Thermococcus gammatolerans (strain DSM 15229 / JCM 11827 / EJ3)</name>
    <dbReference type="NCBI Taxonomy" id="593117"/>
    <lineage>
        <taxon>Archaea</taxon>
        <taxon>Methanobacteriati</taxon>
        <taxon>Methanobacteriota</taxon>
        <taxon>Thermococci</taxon>
        <taxon>Thermococcales</taxon>
        <taxon>Thermococcaceae</taxon>
        <taxon>Thermococcus</taxon>
    </lineage>
</organism>
<accession>C5A6A9</accession>
<feature type="chain" id="PRO_1000202658" description="Phosphomethylpyrimidine synthase">
    <location>
        <begin position="1"/>
        <end position="426"/>
    </location>
</feature>
<feature type="binding site" evidence="1">
    <location>
        <position position="66"/>
    </location>
    <ligand>
        <name>substrate</name>
    </ligand>
</feature>
<feature type="binding site" evidence="1">
    <location>
        <position position="95"/>
    </location>
    <ligand>
        <name>substrate</name>
    </ligand>
</feature>
<feature type="binding site" evidence="1">
    <location>
        <position position="124"/>
    </location>
    <ligand>
        <name>substrate</name>
    </ligand>
</feature>
<feature type="binding site" evidence="1">
    <location>
        <position position="163"/>
    </location>
    <ligand>
        <name>substrate</name>
    </ligand>
</feature>
<feature type="binding site" evidence="1">
    <location>
        <begin position="185"/>
        <end position="187"/>
    </location>
    <ligand>
        <name>substrate</name>
    </ligand>
</feature>
<feature type="binding site" evidence="1">
    <location>
        <begin position="226"/>
        <end position="229"/>
    </location>
    <ligand>
        <name>substrate</name>
    </ligand>
</feature>
<feature type="binding site" evidence="1">
    <location>
        <position position="265"/>
    </location>
    <ligand>
        <name>substrate</name>
    </ligand>
</feature>
<feature type="binding site" evidence="1">
    <location>
        <position position="269"/>
    </location>
    <ligand>
        <name>Zn(2+)</name>
        <dbReference type="ChEBI" id="CHEBI:29105"/>
    </ligand>
</feature>
<feature type="binding site" evidence="1">
    <location>
        <position position="292"/>
    </location>
    <ligand>
        <name>substrate</name>
    </ligand>
</feature>
<feature type="binding site" evidence="1">
    <location>
        <position position="333"/>
    </location>
    <ligand>
        <name>Zn(2+)</name>
        <dbReference type="ChEBI" id="CHEBI:29105"/>
    </ligand>
</feature>
<feature type="binding site" evidence="1">
    <location>
        <position position="407"/>
    </location>
    <ligand>
        <name>[4Fe-4S] cluster</name>
        <dbReference type="ChEBI" id="CHEBI:49883"/>
        <note>4Fe-4S-S-AdoMet</note>
    </ligand>
</feature>
<feature type="binding site" evidence="1">
    <location>
        <position position="410"/>
    </location>
    <ligand>
        <name>[4Fe-4S] cluster</name>
        <dbReference type="ChEBI" id="CHEBI:49883"/>
        <note>4Fe-4S-S-AdoMet</note>
    </ligand>
</feature>
<feature type="binding site" evidence="1">
    <location>
        <position position="414"/>
    </location>
    <ligand>
        <name>[4Fe-4S] cluster</name>
        <dbReference type="ChEBI" id="CHEBI:49883"/>
        <note>4Fe-4S-S-AdoMet</note>
    </ligand>
</feature>
<protein>
    <recommendedName>
        <fullName evidence="1">Phosphomethylpyrimidine synthase</fullName>
        <ecNumber evidence="1">4.1.99.17</ecNumber>
    </recommendedName>
    <alternativeName>
        <fullName evidence="1">Hydroxymethylpyrimidine phosphate synthase</fullName>
        <shortName evidence="1">HMP-P synthase</shortName>
        <shortName evidence="1">HMP-phosphate synthase</shortName>
        <shortName evidence="1">HMPP synthase</shortName>
    </alternativeName>
    <alternativeName>
        <fullName evidence="1">Thiamine biosynthesis protein ThiC</fullName>
    </alternativeName>
</protein>
<gene>
    <name evidence="1" type="primary">thiC</name>
    <name type="ordered locus">TGAM_1269</name>
</gene>
<dbReference type="EC" id="4.1.99.17" evidence="1"/>
<dbReference type="EMBL" id="CP001398">
    <property type="protein sequence ID" value="ACS33771.1"/>
    <property type="molecule type" value="Genomic_DNA"/>
</dbReference>
<dbReference type="RefSeq" id="WP_015858883.1">
    <property type="nucleotide sequence ID" value="NC_012804.1"/>
</dbReference>
<dbReference type="SMR" id="C5A6A9"/>
<dbReference type="STRING" id="593117.TGAM_1269"/>
<dbReference type="PaxDb" id="593117-TGAM_1269"/>
<dbReference type="GeneID" id="7987915"/>
<dbReference type="KEGG" id="tga:TGAM_1269"/>
<dbReference type="PATRIC" id="fig|593117.10.peg.1267"/>
<dbReference type="eggNOG" id="arCOG02741">
    <property type="taxonomic scope" value="Archaea"/>
</dbReference>
<dbReference type="HOGENOM" id="CLU_013181_2_2_2"/>
<dbReference type="OrthoDB" id="335406at2157"/>
<dbReference type="UniPathway" id="UPA00060"/>
<dbReference type="Proteomes" id="UP000001488">
    <property type="component" value="Chromosome"/>
</dbReference>
<dbReference type="GO" id="GO:0051539">
    <property type="term" value="F:4 iron, 4 sulfur cluster binding"/>
    <property type="evidence" value="ECO:0007669"/>
    <property type="project" value="UniProtKB-KW"/>
</dbReference>
<dbReference type="GO" id="GO:0016830">
    <property type="term" value="F:carbon-carbon lyase activity"/>
    <property type="evidence" value="ECO:0007669"/>
    <property type="project" value="InterPro"/>
</dbReference>
<dbReference type="GO" id="GO:0008270">
    <property type="term" value="F:zinc ion binding"/>
    <property type="evidence" value="ECO:0007669"/>
    <property type="project" value="UniProtKB-UniRule"/>
</dbReference>
<dbReference type="GO" id="GO:0009228">
    <property type="term" value="P:thiamine biosynthetic process"/>
    <property type="evidence" value="ECO:0007669"/>
    <property type="project" value="UniProtKB-KW"/>
</dbReference>
<dbReference type="GO" id="GO:0009229">
    <property type="term" value="P:thiamine diphosphate biosynthetic process"/>
    <property type="evidence" value="ECO:0007669"/>
    <property type="project" value="UniProtKB-UniRule"/>
</dbReference>
<dbReference type="FunFam" id="3.20.20.540:FF:000001">
    <property type="entry name" value="Phosphomethylpyrimidine synthase"/>
    <property type="match status" value="1"/>
</dbReference>
<dbReference type="Gene3D" id="3.20.20.540">
    <property type="entry name" value="Radical SAM ThiC family, central domain"/>
    <property type="match status" value="1"/>
</dbReference>
<dbReference type="HAMAP" id="MF_00089">
    <property type="entry name" value="ThiC"/>
    <property type="match status" value="1"/>
</dbReference>
<dbReference type="InterPro" id="IPR037509">
    <property type="entry name" value="ThiC"/>
</dbReference>
<dbReference type="InterPro" id="IPR038521">
    <property type="entry name" value="ThiC/Bza_core_dom"/>
</dbReference>
<dbReference type="InterPro" id="IPR002817">
    <property type="entry name" value="ThiC/BzaA/B"/>
</dbReference>
<dbReference type="NCBIfam" id="NF009895">
    <property type="entry name" value="PRK13352.1"/>
    <property type="match status" value="1"/>
</dbReference>
<dbReference type="NCBIfam" id="TIGR00190">
    <property type="entry name" value="thiC"/>
    <property type="match status" value="1"/>
</dbReference>
<dbReference type="PANTHER" id="PTHR30557:SF1">
    <property type="entry name" value="PHOSPHOMETHYLPYRIMIDINE SYNTHASE, CHLOROPLASTIC"/>
    <property type="match status" value="1"/>
</dbReference>
<dbReference type="PANTHER" id="PTHR30557">
    <property type="entry name" value="THIAMINE BIOSYNTHESIS PROTEIN THIC"/>
    <property type="match status" value="1"/>
</dbReference>
<dbReference type="Pfam" id="PF01964">
    <property type="entry name" value="ThiC_Rad_SAM"/>
    <property type="match status" value="1"/>
</dbReference>
<dbReference type="SFLD" id="SFLDF00407">
    <property type="entry name" value="phosphomethylpyrimidine_syntha"/>
    <property type="match status" value="1"/>
</dbReference>
<dbReference type="SFLD" id="SFLDG01114">
    <property type="entry name" value="phosphomethylpyrimidine_syntha"/>
    <property type="match status" value="1"/>
</dbReference>
<dbReference type="SFLD" id="SFLDS00113">
    <property type="entry name" value="Radical_SAM_Phosphomethylpyrim"/>
    <property type="match status" value="1"/>
</dbReference>
<proteinExistence type="inferred from homology"/>
<evidence type="ECO:0000255" key="1">
    <source>
        <dbReference type="HAMAP-Rule" id="MF_00089"/>
    </source>
</evidence>
<comment type="function">
    <text evidence="1">Catalyzes the synthesis of the hydroxymethylpyrimidine phosphate (HMP-P) moiety of thiamine from aminoimidazole ribotide (AIR) in a radical S-adenosyl-L-methionine (SAM)-dependent reaction.</text>
</comment>
<comment type="catalytic activity">
    <reaction evidence="1">
        <text>5-amino-1-(5-phospho-beta-D-ribosyl)imidazole + S-adenosyl-L-methionine = 4-amino-2-methyl-5-(phosphooxymethyl)pyrimidine + CO + 5'-deoxyadenosine + formate + L-methionine + 3 H(+)</text>
        <dbReference type="Rhea" id="RHEA:24840"/>
        <dbReference type="ChEBI" id="CHEBI:15378"/>
        <dbReference type="ChEBI" id="CHEBI:15740"/>
        <dbReference type="ChEBI" id="CHEBI:17245"/>
        <dbReference type="ChEBI" id="CHEBI:17319"/>
        <dbReference type="ChEBI" id="CHEBI:57844"/>
        <dbReference type="ChEBI" id="CHEBI:58354"/>
        <dbReference type="ChEBI" id="CHEBI:59789"/>
        <dbReference type="ChEBI" id="CHEBI:137981"/>
        <dbReference type="EC" id="4.1.99.17"/>
    </reaction>
</comment>
<comment type="cofactor">
    <cofactor evidence="1">
        <name>[4Fe-4S] cluster</name>
        <dbReference type="ChEBI" id="CHEBI:49883"/>
    </cofactor>
    <text evidence="1">Binds 1 [4Fe-4S] cluster per subunit. The cluster is coordinated with 3 cysteines and an exchangeable S-adenosyl-L-methionine.</text>
</comment>
<comment type="pathway">
    <text evidence="1">Cofactor biosynthesis; thiamine diphosphate biosynthesis.</text>
</comment>
<comment type="similarity">
    <text evidence="1">Belongs to the ThiC family.</text>
</comment>
<reference key="1">
    <citation type="journal article" date="2007" name="Genome Biol.">
        <title>Genome analysis and genome-wide proteomics of Thermococcus gammatolerans, the most radioresistant organism known amongst the Archaea.</title>
        <authorList>
            <person name="Zivanovic Y."/>
            <person name="Armengaud J."/>
            <person name="Lagorce A."/>
            <person name="Leplat C."/>
            <person name="Guerin P."/>
            <person name="Dutertre M."/>
            <person name="Anthouard V."/>
            <person name="Forterre P."/>
            <person name="Wincker P."/>
            <person name="Confalonieri F."/>
        </authorList>
    </citation>
    <scope>NUCLEOTIDE SEQUENCE [LARGE SCALE GENOMIC DNA]</scope>
    <source>
        <strain>DSM 15229 / JCM 11827 / EJ3</strain>
    </source>
</reference>